<name>RS16_FLAPJ</name>
<dbReference type="EMBL" id="AM398681">
    <property type="protein sequence ID" value="CAL42457.1"/>
    <property type="molecule type" value="Genomic_DNA"/>
</dbReference>
<dbReference type="RefSeq" id="WP_011962515.1">
    <property type="nucleotide sequence ID" value="NC_009613.3"/>
</dbReference>
<dbReference type="RefSeq" id="YP_001295275.1">
    <property type="nucleotide sequence ID" value="NC_009613.3"/>
</dbReference>
<dbReference type="SMR" id="A6GWI4"/>
<dbReference type="STRING" id="402612.FP0344"/>
<dbReference type="EnsemblBacteria" id="CAL42457">
    <property type="protein sequence ID" value="CAL42457"/>
    <property type="gene ID" value="FP0344"/>
</dbReference>
<dbReference type="KEGG" id="fps:FP0344"/>
<dbReference type="PATRIC" id="fig|402612.5.peg.356"/>
<dbReference type="eggNOG" id="COG0228">
    <property type="taxonomic scope" value="Bacteria"/>
</dbReference>
<dbReference type="HOGENOM" id="CLU_100590_0_0_10"/>
<dbReference type="OrthoDB" id="9807878at2"/>
<dbReference type="Proteomes" id="UP000006394">
    <property type="component" value="Chromosome"/>
</dbReference>
<dbReference type="GO" id="GO:0005737">
    <property type="term" value="C:cytoplasm"/>
    <property type="evidence" value="ECO:0007669"/>
    <property type="project" value="UniProtKB-ARBA"/>
</dbReference>
<dbReference type="GO" id="GO:0015935">
    <property type="term" value="C:small ribosomal subunit"/>
    <property type="evidence" value="ECO:0007669"/>
    <property type="project" value="TreeGrafter"/>
</dbReference>
<dbReference type="GO" id="GO:0003735">
    <property type="term" value="F:structural constituent of ribosome"/>
    <property type="evidence" value="ECO:0007669"/>
    <property type="project" value="InterPro"/>
</dbReference>
<dbReference type="GO" id="GO:0006412">
    <property type="term" value="P:translation"/>
    <property type="evidence" value="ECO:0007669"/>
    <property type="project" value="UniProtKB-UniRule"/>
</dbReference>
<dbReference type="Gene3D" id="3.30.1320.10">
    <property type="match status" value="1"/>
</dbReference>
<dbReference type="HAMAP" id="MF_00385">
    <property type="entry name" value="Ribosomal_bS16"/>
    <property type="match status" value="1"/>
</dbReference>
<dbReference type="InterPro" id="IPR000307">
    <property type="entry name" value="Ribosomal_bS16"/>
</dbReference>
<dbReference type="InterPro" id="IPR023803">
    <property type="entry name" value="Ribosomal_bS16_dom_sf"/>
</dbReference>
<dbReference type="NCBIfam" id="NF011094">
    <property type="entry name" value="PRK14521.1"/>
    <property type="match status" value="1"/>
</dbReference>
<dbReference type="NCBIfam" id="TIGR00002">
    <property type="entry name" value="S16"/>
    <property type="match status" value="1"/>
</dbReference>
<dbReference type="PANTHER" id="PTHR12919">
    <property type="entry name" value="30S RIBOSOMAL PROTEIN S16"/>
    <property type="match status" value="1"/>
</dbReference>
<dbReference type="PANTHER" id="PTHR12919:SF20">
    <property type="entry name" value="SMALL RIBOSOMAL SUBUNIT PROTEIN BS16M"/>
    <property type="match status" value="1"/>
</dbReference>
<dbReference type="Pfam" id="PF00886">
    <property type="entry name" value="Ribosomal_S16"/>
    <property type="match status" value="1"/>
</dbReference>
<dbReference type="SUPFAM" id="SSF54565">
    <property type="entry name" value="Ribosomal protein S16"/>
    <property type="match status" value="1"/>
</dbReference>
<feature type="chain" id="PRO_1000049255" description="Small ribosomal subunit protein bS16">
    <location>
        <begin position="1"/>
        <end position="180"/>
    </location>
</feature>
<accession>A6GWI4</accession>
<sequence>MSVKIRLQRHGKKGKPFYWVVAADARSKRDGKYLEKIGTYNPNTNPATVDLNLDAAVKWLHNGAQPTDTARAILSYKGALLKHHLDGGVRKGALTQDQADAKLATWIEAKSGKVDAKKEGLTKAQSDAKAKAFKAETVANEKRIATQTEAAKALEAVVEEATTEEVVETATEEANEEKEA</sequence>
<gene>
    <name evidence="1" type="primary">rpsP</name>
    <name type="ordered locus">FP0344</name>
</gene>
<reference key="1">
    <citation type="journal article" date="2007" name="Nat. Biotechnol.">
        <title>Complete genome sequence of the fish pathogen Flavobacterium psychrophilum.</title>
        <authorList>
            <person name="Duchaud E."/>
            <person name="Boussaha M."/>
            <person name="Loux V."/>
            <person name="Bernardet J.-F."/>
            <person name="Michel C."/>
            <person name="Kerouault B."/>
            <person name="Mondot S."/>
            <person name="Nicolas P."/>
            <person name="Bossy R."/>
            <person name="Caron C."/>
            <person name="Bessieres P."/>
            <person name="Gibrat J.-F."/>
            <person name="Claverol S."/>
            <person name="Dumetz F."/>
            <person name="Le Henaff M."/>
            <person name="Benmansour A."/>
        </authorList>
    </citation>
    <scope>NUCLEOTIDE SEQUENCE [LARGE SCALE GENOMIC DNA]</scope>
    <source>
        <strain>ATCC 49511 / DSM 21280 / CIP 103535 / JIP02/86</strain>
    </source>
</reference>
<protein>
    <recommendedName>
        <fullName evidence="1">Small ribosomal subunit protein bS16</fullName>
    </recommendedName>
    <alternativeName>
        <fullName evidence="2">30S ribosomal protein S16</fullName>
    </alternativeName>
</protein>
<evidence type="ECO:0000255" key="1">
    <source>
        <dbReference type="HAMAP-Rule" id="MF_00385"/>
    </source>
</evidence>
<evidence type="ECO:0000305" key="2"/>
<comment type="similarity">
    <text evidence="1">Belongs to the bacterial ribosomal protein bS16 family.</text>
</comment>
<proteinExistence type="inferred from homology"/>
<keyword id="KW-1185">Reference proteome</keyword>
<keyword id="KW-0687">Ribonucleoprotein</keyword>
<keyword id="KW-0689">Ribosomal protein</keyword>
<organism>
    <name type="scientific">Flavobacterium psychrophilum (strain ATCC 49511 / DSM 21280 / CIP 103535 / JIP02/86)</name>
    <dbReference type="NCBI Taxonomy" id="402612"/>
    <lineage>
        <taxon>Bacteria</taxon>
        <taxon>Pseudomonadati</taxon>
        <taxon>Bacteroidota</taxon>
        <taxon>Flavobacteriia</taxon>
        <taxon>Flavobacteriales</taxon>
        <taxon>Flavobacteriaceae</taxon>
        <taxon>Flavobacterium</taxon>
    </lineage>
</organism>